<evidence type="ECO:0000250" key="1">
    <source>
        <dbReference type="UniProtKB" id="P36924"/>
    </source>
</evidence>
<evidence type="ECO:0000255" key="2">
    <source>
        <dbReference type="PROSITE-ProRule" id="PRU00594"/>
    </source>
</evidence>
<evidence type="ECO:0000255" key="3">
    <source>
        <dbReference type="PROSITE-ProRule" id="PRU10050"/>
    </source>
</evidence>
<evidence type="ECO:0000269" key="4">
    <source>
    </source>
</evidence>
<evidence type="ECO:0000305" key="5"/>
<sequence>MIGAFKRLGQKLFLTLLTASLIFASSIVTANASIAPNFKVFVMGPLEKVTDFNAFKDQLITLKNNGVYGITTDIWWGYVENAGENQFDWSYYKTYADTVRAAGLKWVPIMSTHACGGNVGDTVNIPIPSWVWTKDTQDNMQYKDEAGNWDNEAVSPWYSGLTQLYNEFYSSFASNFSSYKDIITKIYISGGPSGELRYPSYNPSHGWTYPGRGSLQCYSKAAITSFQNAMKSKYGTIAAVNSAWGTSLTDFSQISPPTDGDNFFTNGYKTTYGNDFLTWYQSVLTNELANIASVAHSCFDPVFNVPIGAKIAGVHWLYNSPTMPHAAEYCAGYYNYSTLLDQFKASNLAMTFTCLEMDDSNAYVSPYYSAPMTLVHYVANLANNKGIVHNGENALAISNNNQAYVNCANELTGYNFSGFTLLRLSNIVNSDGSVTSEMAPFVINIVTLTPNGTIPVTFTINNATTYYGQNVYIVGSTSDLGNWNTTYARGPASCPNYPTWTITLNLLPGEQIQFKAVKIDSSGNVTWEGGSNHTYTVPTSGTGSVTITWQN</sequence>
<organism>
    <name type="scientific">Thermoanaerobacterium thermosulfurigenes</name>
    <name type="common">Clostridium thermosulfurogenes</name>
    <dbReference type="NCBI Taxonomy" id="33950"/>
    <lineage>
        <taxon>Bacteria</taxon>
        <taxon>Bacillati</taxon>
        <taxon>Bacillota</taxon>
        <taxon>Clostridia</taxon>
        <taxon>Thermoanaerobacterales</taxon>
        <taxon>Thermoanaerobacteraceae</taxon>
        <taxon>Thermoanaerobacterium</taxon>
    </lineage>
</organism>
<proteinExistence type="evidence at protein level"/>
<accession>P19584</accession>
<comment type="catalytic activity">
    <reaction>
        <text>Hydrolysis of (1-&gt;4)-alpha-D-glucosidic linkages in polysaccharides so as to remove successive maltose units from the non-reducing ends of the chains.</text>
        <dbReference type="EC" id="3.2.1.2"/>
    </reaction>
</comment>
<comment type="cofactor">
    <cofactor evidence="1">
        <name>Ca(2+)</name>
        <dbReference type="ChEBI" id="CHEBI:29108"/>
    </cofactor>
    <text evidence="1">Binds 1 Ca(2+) ion per subunit.</text>
</comment>
<comment type="biophysicochemical properties">
    <temperatureDependence>
        <text>Optimum temperature is 75 degrees Celsius. Stable at 80 degrees Celsius.</text>
    </temperatureDependence>
</comment>
<comment type="subunit">
    <text>Monomer.</text>
</comment>
<comment type="similarity">
    <text evidence="5">Belongs to the glycosyl hydrolase 14 family.</text>
</comment>
<feature type="signal peptide" evidence="4">
    <location>
        <begin position="1"/>
        <end position="32"/>
    </location>
</feature>
<feature type="chain" id="PRO_0000001456" description="Thermophilic beta-amylase">
    <location>
        <begin position="33"/>
        <end position="551"/>
    </location>
</feature>
<feature type="domain" description="CBM20" evidence="2">
    <location>
        <begin position="448"/>
        <end position="551"/>
    </location>
</feature>
<feature type="active site" description="Proton donor" evidence="3">
    <location>
        <position position="195"/>
    </location>
</feature>
<feature type="active site" description="Proton acceptor" evidence="1">
    <location>
        <position position="392"/>
    </location>
</feature>
<feature type="binding site" evidence="1">
    <location>
        <position position="73"/>
    </location>
    <ligand>
        <name>substrate</name>
    </ligand>
</feature>
<feature type="binding site" evidence="1">
    <location>
        <position position="80"/>
    </location>
    <ligand>
        <name>Ca(2+)</name>
        <dbReference type="ChEBI" id="CHEBI:29108"/>
    </ligand>
</feature>
<feature type="binding site" evidence="1">
    <location>
        <position position="113"/>
    </location>
    <ligand>
        <name>substrate</name>
    </ligand>
</feature>
<feature type="binding site" evidence="1">
    <location>
        <position position="121"/>
    </location>
    <ligand>
        <name>substrate</name>
    </ligand>
</feature>
<feature type="binding site" evidence="1">
    <location>
        <position position="167"/>
    </location>
    <ligand>
        <name>Ca(2+)</name>
        <dbReference type="ChEBI" id="CHEBI:29108"/>
    </ligand>
</feature>
<feature type="binding site" evidence="1">
    <location>
        <position position="310"/>
    </location>
    <ligand>
        <name>substrate</name>
    </ligand>
</feature>
<feature type="binding site" evidence="1">
    <location>
        <position position="315"/>
    </location>
    <ligand>
        <name>substrate</name>
    </ligand>
</feature>
<feature type="binding site" evidence="1">
    <location>
        <position position="353"/>
    </location>
    <ligand>
        <name>substrate</name>
    </ligand>
</feature>
<feature type="binding site" evidence="1">
    <location>
        <begin position="393"/>
        <end position="394"/>
    </location>
    <ligand>
        <name>substrate</name>
    </ligand>
</feature>
<feature type="binding site" evidence="1">
    <location>
        <position position="423"/>
    </location>
    <ligand>
        <name>substrate</name>
    </ligand>
</feature>
<dbReference type="EC" id="3.2.1.2"/>
<dbReference type="EMBL" id="M22471">
    <property type="protein sequence ID" value="AAA23204.1"/>
    <property type="molecule type" value="Genomic_DNA"/>
</dbReference>
<dbReference type="PIR" id="A31389">
    <property type="entry name" value="A31389"/>
</dbReference>
<dbReference type="SMR" id="P19584"/>
<dbReference type="CAZy" id="CBM20">
    <property type="family name" value="Carbohydrate-Binding Module Family 20"/>
</dbReference>
<dbReference type="CAZy" id="GH14">
    <property type="family name" value="Glycoside Hydrolase Family 14"/>
</dbReference>
<dbReference type="GO" id="GO:0016161">
    <property type="term" value="F:beta-amylase activity"/>
    <property type="evidence" value="ECO:0007669"/>
    <property type="project" value="UniProtKB-EC"/>
</dbReference>
<dbReference type="GO" id="GO:0046872">
    <property type="term" value="F:metal ion binding"/>
    <property type="evidence" value="ECO:0007669"/>
    <property type="project" value="UniProtKB-KW"/>
</dbReference>
<dbReference type="GO" id="GO:2001070">
    <property type="term" value="F:starch binding"/>
    <property type="evidence" value="ECO:0007669"/>
    <property type="project" value="InterPro"/>
</dbReference>
<dbReference type="GO" id="GO:0000272">
    <property type="term" value="P:polysaccharide catabolic process"/>
    <property type="evidence" value="ECO:0007669"/>
    <property type="project" value="UniProtKB-KW"/>
</dbReference>
<dbReference type="CDD" id="cd05809">
    <property type="entry name" value="CBM20_beta_amylase"/>
    <property type="match status" value="1"/>
</dbReference>
<dbReference type="Gene3D" id="3.20.20.80">
    <property type="entry name" value="Glycosidases"/>
    <property type="match status" value="1"/>
</dbReference>
<dbReference type="Gene3D" id="2.60.40.10">
    <property type="entry name" value="Immunoglobulins"/>
    <property type="match status" value="1"/>
</dbReference>
<dbReference type="InterPro" id="IPR002044">
    <property type="entry name" value="CBM20"/>
</dbReference>
<dbReference type="InterPro" id="IPR034835">
    <property type="entry name" value="CBM20_beta_amylase"/>
</dbReference>
<dbReference type="InterPro" id="IPR001554">
    <property type="entry name" value="Glyco_hydro_14"/>
</dbReference>
<dbReference type="InterPro" id="IPR018238">
    <property type="entry name" value="Glyco_hydro_14_CS"/>
</dbReference>
<dbReference type="InterPro" id="IPR000125">
    <property type="entry name" value="Glyco_hydro_14A_bac"/>
</dbReference>
<dbReference type="InterPro" id="IPR017853">
    <property type="entry name" value="Glycoside_hydrolase_SF"/>
</dbReference>
<dbReference type="InterPro" id="IPR013783">
    <property type="entry name" value="Ig-like_fold"/>
</dbReference>
<dbReference type="PANTHER" id="PTHR31352">
    <property type="entry name" value="BETA-AMYLASE 1, CHLOROPLASTIC"/>
    <property type="match status" value="1"/>
</dbReference>
<dbReference type="PANTHER" id="PTHR31352:SF1">
    <property type="entry name" value="BETA-AMYLASE 3, CHLOROPLASTIC"/>
    <property type="match status" value="1"/>
</dbReference>
<dbReference type="Pfam" id="PF00686">
    <property type="entry name" value="CBM_20"/>
    <property type="match status" value="1"/>
</dbReference>
<dbReference type="Pfam" id="PF01373">
    <property type="entry name" value="Glyco_hydro_14"/>
    <property type="match status" value="1"/>
</dbReference>
<dbReference type="PRINTS" id="PR00750">
    <property type="entry name" value="BETAAMYLASE"/>
</dbReference>
<dbReference type="PRINTS" id="PR00841">
    <property type="entry name" value="GLHYDLASE14A"/>
</dbReference>
<dbReference type="SMART" id="SM01065">
    <property type="entry name" value="CBM_2"/>
    <property type="match status" value="1"/>
</dbReference>
<dbReference type="SUPFAM" id="SSF51445">
    <property type="entry name" value="(Trans)glycosidases"/>
    <property type="match status" value="1"/>
</dbReference>
<dbReference type="PROSITE" id="PS00506">
    <property type="entry name" value="BETA_AMYLASE_1"/>
    <property type="match status" value="1"/>
</dbReference>
<dbReference type="PROSITE" id="PS00679">
    <property type="entry name" value="BETA_AMYLASE_2"/>
    <property type="match status" value="1"/>
</dbReference>
<dbReference type="PROSITE" id="PS51166">
    <property type="entry name" value="CBM20"/>
    <property type="match status" value="1"/>
</dbReference>
<reference key="1">
    <citation type="journal article" date="1988" name="J. Bacteriol.">
        <title>Cloning and sequencing of the gene encoding thermophilic beta-amylase of Clostridium thermosulfurogenes.</title>
        <authorList>
            <person name="Kitamoto N."/>
            <person name="Yamagata H."/>
            <person name="Kato T."/>
            <person name="Tsukagoshi N."/>
            <person name="Udaka S."/>
        </authorList>
    </citation>
    <scope>NUCLEOTIDE SEQUENCE [GENOMIC DNA]</scope>
    <scope>PROTEIN SEQUENCE OF 33-44</scope>
    <source>
        <strain>ATCC 33743 / DSM 2229 / 4B</strain>
    </source>
</reference>
<name>AMYB_THETU</name>
<protein>
    <recommendedName>
        <fullName>Thermophilic beta-amylase</fullName>
        <ecNumber>3.2.1.2</ecNumber>
    </recommendedName>
    <alternativeName>
        <fullName>1,4-alpha-D-glucan maltohydrolase</fullName>
    </alternativeName>
</protein>
<keyword id="KW-0119">Carbohydrate metabolism</keyword>
<keyword id="KW-0903">Direct protein sequencing</keyword>
<keyword id="KW-0326">Glycosidase</keyword>
<keyword id="KW-0378">Hydrolase</keyword>
<keyword id="KW-0479">Metal-binding</keyword>
<keyword id="KW-0624">Polysaccharide degradation</keyword>
<keyword id="KW-0732">Signal</keyword>